<reference key="1">
    <citation type="journal article" date="1997" name="Science">
        <title>The complete genome sequence of Escherichia coli K-12.</title>
        <authorList>
            <person name="Blattner F.R."/>
            <person name="Plunkett G. III"/>
            <person name="Bloch C.A."/>
            <person name="Perna N.T."/>
            <person name="Burland V."/>
            <person name="Riley M."/>
            <person name="Collado-Vides J."/>
            <person name="Glasner J.D."/>
            <person name="Rode C.K."/>
            <person name="Mayhew G.F."/>
            <person name="Gregor J."/>
            <person name="Davis N.W."/>
            <person name="Kirkpatrick H.A."/>
            <person name="Goeden M.A."/>
            <person name="Rose D.J."/>
            <person name="Mau B."/>
            <person name="Shao Y."/>
        </authorList>
    </citation>
    <scope>NUCLEOTIDE SEQUENCE [LARGE SCALE GENOMIC DNA]</scope>
    <source>
        <strain>K12 / MG1655 / ATCC 47076</strain>
    </source>
</reference>
<name>INSB9_ECOLI</name>
<dbReference type="EMBL" id="U00096">
    <property type="protein sequence ID" value="AYC08167.1"/>
    <property type="molecule type" value="Genomic_DNA"/>
</dbReference>
<dbReference type="FunCoup" id="A0A385XJL4">
    <property type="interactions" value="6"/>
</dbReference>
<dbReference type="EnsemblBacteria" id="AYC08167">
    <property type="protein sequence ID" value="AYC08167"/>
    <property type="gene ID" value="b4710"/>
</dbReference>
<dbReference type="KEGG" id="eco:b0021"/>
<dbReference type="KEGG" id="eco:b1893"/>
<dbReference type="KEGG" id="eco:b3445"/>
<dbReference type="KEGG" id="ecoc:C3026_17555"/>
<dbReference type="KEGG" id="ecoc:C3026_18660"/>
<dbReference type="InParanoid" id="A0A385XJL4"/>
<dbReference type="OMA" id="VEICRAD"/>
<dbReference type="PRO" id="PR:A0A385XJL4"/>
<dbReference type="Proteomes" id="UP000000625">
    <property type="component" value="Chromosome"/>
</dbReference>
<dbReference type="GO" id="GO:0003677">
    <property type="term" value="F:DNA binding"/>
    <property type="evidence" value="ECO:0007669"/>
    <property type="project" value="InterPro"/>
</dbReference>
<dbReference type="GO" id="GO:0004803">
    <property type="term" value="F:transposase activity"/>
    <property type="evidence" value="ECO:0007669"/>
    <property type="project" value="InterPro"/>
</dbReference>
<dbReference type="GO" id="GO:0006313">
    <property type="term" value="P:DNA transposition"/>
    <property type="evidence" value="ECO:0000318"/>
    <property type="project" value="GO_Central"/>
</dbReference>
<dbReference type="InterPro" id="IPR005063">
    <property type="entry name" value="Transposase_27"/>
</dbReference>
<dbReference type="InterPro" id="IPR051354">
    <property type="entry name" value="Transposase_27_IS1"/>
</dbReference>
<dbReference type="NCBIfam" id="NF033558">
    <property type="entry name" value="transpos_IS1"/>
    <property type="match status" value="1"/>
</dbReference>
<dbReference type="PANTHER" id="PTHR33293">
    <property type="entry name" value="INSERTION ELEMENT IS1 1 PROTEIN INSB-RELATED"/>
    <property type="match status" value="1"/>
</dbReference>
<dbReference type="PANTHER" id="PTHR33293:SF1">
    <property type="entry name" value="INSERTION ELEMENT IS1 1 PROTEIN INSB-RELATED"/>
    <property type="match status" value="1"/>
</dbReference>
<dbReference type="Pfam" id="PF03400">
    <property type="entry name" value="DDE_Tnp_IS1"/>
    <property type="match status" value="1"/>
</dbReference>
<feature type="chain" id="PRO_0000446258" description="Insertion element IS1 9 protein InsB">
    <location>
        <begin position="1"/>
        <end position="167"/>
    </location>
</feature>
<gene>
    <name type="primary">insB9</name>
    <name type="ordered locus">b4710</name>
</gene>
<proteinExistence type="inferred from homology"/>
<evidence type="ECO:0000305" key="1"/>
<sequence length="167" mass="19565">MPGNSPHYGRWPQHDFTSLKKLRPQSVTSRIQPGSDVIVCAEMDEQWGYVGAKSRQRWLFYAYDSLRKTVVAHVFGERTMATLGRLMSLLSPFDVVIWMTDGWPLYESRLKGKLHVISKRYTQRIERHNLNLRQHLARLGRKSLSFSKSVELHDKVIGHYLNIKHYQ</sequence>
<comment type="function">
    <text>Absolutely required for transposition of IS1.</text>
</comment>
<comment type="similarity">
    <text evidence="1">Belongs to the transposase 27 family.</text>
</comment>
<accession>A0A385XJL4</accession>
<protein>
    <recommendedName>
        <fullName>Insertion element IS1 9 protein InsB</fullName>
    </recommendedName>
    <alternativeName>
        <fullName>IS1i</fullName>
    </alternativeName>
</protein>
<organism>
    <name type="scientific">Escherichia coli (strain K12)</name>
    <dbReference type="NCBI Taxonomy" id="83333"/>
    <lineage>
        <taxon>Bacteria</taxon>
        <taxon>Pseudomonadati</taxon>
        <taxon>Pseudomonadota</taxon>
        <taxon>Gammaproteobacteria</taxon>
        <taxon>Enterobacterales</taxon>
        <taxon>Enterobacteriaceae</taxon>
        <taxon>Escherichia</taxon>
    </lineage>
</organism>
<keyword id="KW-0233">DNA recombination</keyword>
<keyword id="KW-1185">Reference proteome</keyword>
<keyword id="KW-0814">Transposable element</keyword>
<keyword id="KW-0815">Transposition</keyword>